<reference key="1">
    <citation type="journal article" date="2005" name="Nucleic Acids Res.">
        <title>Genome dynamics and diversity of Shigella species, the etiologic agents of bacillary dysentery.</title>
        <authorList>
            <person name="Yang F."/>
            <person name="Yang J."/>
            <person name="Zhang X."/>
            <person name="Chen L."/>
            <person name="Jiang Y."/>
            <person name="Yan Y."/>
            <person name="Tang X."/>
            <person name="Wang J."/>
            <person name="Xiong Z."/>
            <person name="Dong J."/>
            <person name="Xue Y."/>
            <person name="Zhu Y."/>
            <person name="Xu X."/>
            <person name="Sun L."/>
            <person name="Chen S."/>
            <person name="Nie H."/>
            <person name="Peng J."/>
            <person name="Xu J."/>
            <person name="Wang Y."/>
            <person name="Yuan Z."/>
            <person name="Wen Y."/>
            <person name="Yao Z."/>
            <person name="Shen Y."/>
            <person name="Qiang B."/>
            <person name="Hou Y."/>
            <person name="Yu J."/>
            <person name="Jin Q."/>
        </authorList>
    </citation>
    <scope>NUCLEOTIDE SEQUENCE [LARGE SCALE GENOMIC DNA]</scope>
    <source>
        <strain>Ss046</strain>
    </source>
</reference>
<dbReference type="EC" id="3.1.3.-"/>
<dbReference type="EMBL" id="CP000038">
    <property type="protein sequence ID" value="AAZ87953.1"/>
    <property type="molecule type" value="Genomic_DNA"/>
</dbReference>
<dbReference type="RefSeq" id="WP_000983603.1">
    <property type="nucleotide sequence ID" value="NC_007384.1"/>
</dbReference>
<dbReference type="SMR" id="Q3Z2Q9"/>
<dbReference type="GeneID" id="93776186"/>
<dbReference type="KEGG" id="ssn:SSON_1236"/>
<dbReference type="HOGENOM" id="CLU_080718_1_0_6"/>
<dbReference type="Proteomes" id="UP000002529">
    <property type="component" value="Chromosome"/>
</dbReference>
<dbReference type="GO" id="GO:0009288">
    <property type="term" value="C:bacterial-type flagellum"/>
    <property type="evidence" value="ECO:0007669"/>
    <property type="project" value="InterPro"/>
</dbReference>
<dbReference type="GO" id="GO:0005737">
    <property type="term" value="C:cytoplasm"/>
    <property type="evidence" value="ECO:0007669"/>
    <property type="project" value="UniProtKB-SubCell"/>
</dbReference>
<dbReference type="GO" id="GO:0004721">
    <property type="term" value="F:phosphoprotein phosphatase activity"/>
    <property type="evidence" value="ECO:0007669"/>
    <property type="project" value="UniProtKB-KW"/>
</dbReference>
<dbReference type="GO" id="GO:0097588">
    <property type="term" value="P:archaeal or bacterial-type flagellum-dependent cell motility"/>
    <property type="evidence" value="ECO:0007669"/>
    <property type="project" value="UniProtKB-KW"/>
</dbReference>
<dbReference type="GO" id="GO:0006935">
    <property type="term" value="P:chemotaxis"/>
    <property type="evidence" value="ECO:0007669"/>
    <property type="project" value="UniProtKB-KW"/>
</dbReference>
<dbReference type="GO" id="GO:0050920">
    <property type="term" value="P:regulation of chemotaxis"/>
    <property type="evidence" value="ECO:0007669"/>
    <property type="project" value="InterPro"/>
</dbReference>
<dbReference type="FunFam" id="1.10.287.500:FF:000001">
    <property type="entry name" value="Protein phosphatase CheZ"/>
    <property type="match status" value="1"/>
</dbReference>
<dbReference type="Gene3D" id="1.10.287.500">
    <property type="entry name" value="Helix hairpin bin"/>
    <property type="match status" value="1"/>
</dbReference>
<dbReference type="Gene3D" id="1.20.5.590">
    <property type="entry name" value="Single helix bin"/>
    <property type="match status" value="1"/>
</dbReference>
<dbReference type="InterPro" id="IPR007439">
    <property type="entry name" value="Chemotax_Pase_CheZ"/>
</dbReference>
<dbReference type="InterPro" id="IPR050992">
    <property type="entry name" value="CheZ_family_phosphatases"/>
</dbReference>
<dbReference type="NCBIfam" id="NF008368">
    <property type="entry name" value="PRK11166.1"/>
    <property type="match status" value="1"/>
</dbReference>
<dbReference type="PANTHER" id="PTHR43693">
    <property type="entry name" value="PROTEIN PHOSPHATASE CHEZ"/>
    <property type="match status" value="1"/>
</dbReference>
<dbReference type="PANTHER" id="PTHR43693:SF1">
    <property type="entry name" value="PROTEIN PHOSPHATASE CHEZ"/>
    <property type="match status" value="1"/>
</dbReference>
<dbReference type="Pfam" id="PF04344">
    <property type="entry name" value="CheZ"/>
    <property type="match status" value="1"/>
</dbReference>
<dbReference type="PIRSF" id="PIRSF002884">
    <property type="entry name" value="CheZ"/>
    <property type="match status" value="1"/>
</dbReference>
<dbReference type="SUPFAM" id="SSF75708">
    <property type="entry name" value="Chemotaxis phosphatase CheZ"/>
    <property type="match status" value="1"/>
</dbReference>
<evidence type="ECO:0000250" key="1"/>
<evidence type="ECO:0000305" key="2"/>
<organism>
    <name type="scientific">Shigella sonnei (strain Ss046)</name>
    <dbReference type="NCBI Taxonomy" id="300269"/>
    <lineage>
        <taxon>Bacteria</taxon>
        <taxon>Pseudomonadati</taxon>
        <taxon>Pseudomonadota</taxon>
        <taxon>Gammaproteobacteria</taxon>
        <taxon>Enterobacterales</taxon>
        <taxon>Enterobacteriaceae</taxon>
        <taxon>Shigella</taxon>
    </lineage>
</organism>
<sequence>MMQPSIKPADEHSAGDIIARIGSLTRMLRDSLRELGLDQAIAEAAEAIPDARDRLYYVVQMTAQAAERALNSVEASQPHQDQMEKSAKALTQRWDDWFADPIDLADARELVTDTRQFLADVPAHTSFTNAQLLEIMMAQDFQDLTGLVIKRMMDVIQEIERQLLMVLLENIPEQESRPKRENQSLLNGPQVDTSKVGVVASQDQVDDLLDSLGF</sequence>
<comment type="function">
    <text evidence="1">Plays an important role in bacterial chemotaxis signal transduction pathway by accelerating the dephosphorylation of phosphorylated CheY (CheY-P).</text>
</comment>
<comment type="subunit">
    <text evidence="1">Homodimer.</text>
</comment>
<comment type="subcellular location">
    <subcellularLocation>
        <location evidence="1">Cytoplasm</location>
    </subcellularLocation>
</comment>
<comment type="similarity">
    <text evidence="2">Belongs to the CheZ family.</text>
</comment>
<name>CHEZ_SHISS</name>
<proteinExistence type="inferred from homology"/>
<accession>Q3Z2Q9</accession>
<feature type="chain" id="PRO_0000410785" description="Protein phosphatase CheZ">
    <location>
        <begin position="1"/>
        <end position="214"/>
    </location>
</feature>
<protein>
    <recommendedName>
        <fullName>Protein phosphatase CheZ</fullName>
        <ecNumber>3.1.3.-</ecNumber>
    </recommendedName>
    <alternativeName>
        <fullName>Chemotaxis protein CheZ</fullName>
    </alternativeName>
</protein>
<keyword id="KW-0145">Chemotaxis</keyword>
<keyword id="KW-0963">Cytoplasm</keyword>
<keyword id="KW-0283">Flagellar rotation</keyword>
<keyword id="KW-0378">Hydrolase</keyword>
<keyword id="KW-0904">Protein phosphatase</keyword>
<keyword id="KW-1185">Reference proteome</keyword>
<gene>
    <name type="primary">cheZ</name>
    <name type="ordered locus">SSON_1236</name>
</gene>